<comment type="similarity">
    <text evidence="1">Belongs to the bacterial ribosomal protein bS16 family.</text>
</comment>
<proteinExistence type="inferred from homology"/>
<name>RS16_HAEIE</name>
<keyword id="KW-0687">Ribonucleoprotein</keyword>
<keyword id="KW-0689">Ribosomal protein</keyword>
<organism>
    <name type="scientific">Haemophilus influenzae (strain PittEE)</name>
    <dbReference type="NCBI Taxonomy" id="374930"/>
    <lineage>
        <taxon>Bacteria</taxon>
        <taxon>Pseudomonadati</taxon>
        <taxon>Pseudomonadota</taxon>
        <taxon>Gammaproteobacteria</taxon>
        <taxon>Pasteurellales</taxon>
        <taxon>Pasteurellaceae</taxon>
        <taxon>Haemophilus</taxon>
    </lineage>
</organism>
<gene>
    <name evidence="1" type="primary">rpsP</name>
    <name type="ordered locus">CGSHiEE_02225</name>
</gene>
<evidence type="ECO:0000255" key="1">
    <source>
        <dbReference type="HAMAP-Rule" id="MF_00385"/>
    </source>
</evidence>
<evidence type="ECO:0000305" key="2"/>
<protein>
    <recommendedName>
        <fullName evidence="1">Small ribosomal subunit protein bS16</fullName>
    </recommendedName>
    <alternativeName>
        <fullName evidence="2">30S ribosomal protein S16</fullName>
    </alternativeName>
</protein>
<reference key="1">
    <citation type="journal article" date="2007" name="Genome Biol.">
        <title>Characterization and modeling of the Haemophilus influenzae core and supragenomes based on the complete genomic sequences of Rd and 12 clinical nontypeable strains.</title>
        <authorList>
            <person name="Hogg J.S."/>
            <person name="Hu F.Z."/>
            <person name="Janto B."/>
            <person name="Boissy R."/>
            <person name="Hayes J."/>
            <person name="Keefe R."/>
            <person name="Post J.C."/>
            <person name="Ehrlich G.D."/>
        </authorList>
    </citation>
    <scope>NUCLEOTIDE SEQUENCE [LARGE SCALE GENOMIC DNA]</scope>
    <source>
        <strain>PittEE</strain>
    </source>
</reference>
<accession>A5UAV1</accession>
<sequence>MVTIRLSRGGAKKRPFYQIVVADSRSPRDGRFIERVGFFNPIAQGNAERLRINLERVNHWVAQGASLSDRVASLVKEAQKAA</sequence>
<feature type="chain" id="PRO_1000049263" description="Small ribosomal subunit protein bS16">
    <location>
        <begin position="1"/>
        <end position="82"/>
    </location>
</feature>
<dbReference type="EMBL" id="CP000671">
    <property type="protein sequence ID" value="ABQ97902.1"/>
    <property type="molecule type" value="Genomic_DNA"/>
</dbReference>
<dbReference type="SMR" id="A5UAV1"/>
<dbReference type="KEGG" id="hip:CGSHiEE_02225"/>
<dbReference type="HOGENOM" id="CLU_100590_5_1_6"/>
<dbReference type="GO" id="GO:0005737">
    <property type="term" value="C:cytoplasm"/>
    <property type="evidence" value="ECO:0007669"/>
    <property type="project" value="UniProtKB-ARBA"/>
</dbReference>
<dbReference type="GO" id="GO:0015935">
    <property type="term" value="C:small ribosomal subunit"/>
    <property type="evidence" value="ECO:0007669"/>
    <property type="project" value="TreeGrafter"/>
</dbReference>
<dbReference type="GO" id="GO:0003735">
    <property type="term" value="F:structural constituent of ribosome"/>
    <property type="evidence" value="ECO:0007669"/>
    <property type="project" value="InterPro"/>
</dbReference>
<dbReference type="GO" id="GO:0006412">
    <property type="term" value="P:translation"/>
    <property type="evidence" value="ECO:0007669"/>
    <property type="project" value="UniProtKB-UniRule"/>
</dbReference>
<dbReference type="FunFam" id="3.30.1320.10:FF:000001">
    <property type="entry name" value="30S ribosomal protein S16"/>
    <property type="match status" value="1"/>
</dbReference>
<dbReference type="Gene3D" id="3.30.1320.10">
    <property type="match status" value="1"/>
</dbReference>
<dbReference type="HAMAP" id="MF_00385">
    <property type="entry name" value="Ribosomal_bS16"/>
    <property type="match status" value="1"/>
</dbReference>
<dbReference type="InterPro" id="IPR000307">
    <property type="entry name" value="Ribosomal_bS16"/>
</dbReference>
<dbReference type="InterPro" id="IPR020592">
    <property type="entry name" value="Ribosomal_bS16_CS"/>
</dbReference>
<dbReference type="InterPro" id="IPR023803">
    <property type="entry name" value="Ribosomal_bS16_dom_sf"/>
</dbReference>
<dbReference type="NCBIfam" id="TIGR00002">
    <property type="entry name" value="S16"/>
    <property type="match status" value="1"/>
</dbReference>
<dbReference type="PANTHER" id="PTHR12919">
    <property type="entry name" value="30S RIBOSOMAL PROTEIN S16"/>
    <property type="match status" value="1"/>
</dbReference>
<dbReference type="PANTHER" id="PTHR12919:SF20">
    <property type="entry name" value="SMALL RIBOSOMAL SUBUNIT PROTEIN BS16M"/>
    <property type="match status" value="1"/>
</dbReference>
<dbReference type="Pfam" id="PF00886">
    <property type="entry name" value="Ribosomal_S16"/>
    <property type="match status" value="1"/>
</dbReference>
<dbReference type="SUPFAM" id="SSF54565">
    <property type="entry name" value="Ribosomal protein S16"/>
    <property type="match status" value="1"/>
</dbReference>
<dbReference type="PROSITE" id="PS00732">
    <property type="entry name" value="RIBOSOMAL_S16"/>
    <property type="match status" value="1"/>
</dbReference>